<proteinExistence type="evidence at transcript level"/>
<sequence length="204" mass="22611">MSWTCPRCQQPVYFAEKVSSLGKNWHRFCLKCERCHSILSPGGHAEHNGRPYCHKPCYGALFGPRGVNIGGVGCYLYNLPTPPPASRISLSPSNFSPPRPRTGLSRAKKGPPYLKTFTGETSLCPGCGDPVFFAEKVMSLGRNWHRPCLRCQRCRKTLTAGSHAEHDGMPYCHIPCYGYLFGPKGVNIGDVGCYIYDPVDIRSK</sequence>
<gene>
    <name type="primary">Crip3</name>
    <name type="synonym">Tlp</name>
</gene>
<keyword id="KW-0025">Alternative splicing</keyword>
<keyword id="KW-0963">Cytoplasm</keyword>
<keyword id="KW-0440">LIM domain</keyword>
<keyword id="KW-0479">Metal-binding</keyword>
<keyword id="KW-1185">Reference proteome</keyword>
<keyword id="KW-0677">Repeat</keyword>
<keyword id="KW-0862">Zinc</keyword>
<protein>
    <recommendedName>
        <fullName>Cysteine-rich protein 3</fullName>
        <shortName>CRP-3</shortName>
    </recommendedName>
    <alternativeName>
        <fullName>Thymus LIM protein</fullName>
        <shortName>m17TLP</shortName>
    </alternativeName>
</protein>
<evidence type="ECO:0000255" key="1">
    <source>
        <dbReference type="PROSITE-ProRule" id="PRU00125"/>
    </source>
</evidence>
<evidence type="ECO:0000256" key="2">
    <source>
        <dbReference type="SAM" id="MobiDB-lite"/>
    </source>
</evidence>
<evidence type="ECO:0000269" key="3">
    <source>
    </source>
</evidence>
<evidence type="ECO:0000303" key="4">
    <source>
    </source>
</evidence>
<evidence type="ECO:0000303" key="5">
    <source>
    </source>
</evidence>
<evidence type="ECO:0000303" key="6">
    <source>
    </source>
</evidence>
<evidence type="ECO:0000305" key="7"/>
<reference key="1">
    <citation type="journal article" date="2001" name="Mol. Cell. Biol.">
        <title>Identification and characterization of thymus LIM protein: targeted disruption reduces thymus cellularity.</title>
        <authorList>
            <person name="Kirchner J."/>
            <person name="Forbush K.A."/>
            <person name="Bevan M.J."/>
        </authorList>
    </citation>
    <scope>NUCLEOTIDE SEQUENCE [GENOMIC DNA / MRNA] (ISOFORMS 2 AND 3)</scope>
    <scope>SUBCELLULAR LOCATION</scope>
    <scope>TISSUE SPECIFICITY</scope>
    <source>
        <strain>C57BL/6J</strain>
    </source>
</reference>
<reference key="2">
    <citation type="journal article" date="2004" name="Microbes Infect.">
        <title>The human and mouse orthologous LIM-only proteins respectively encoded in chromosome 6 and 17 show a different expression pattern.</title>
        <authorList>
            <person name="Casrouge A."/>
            <person name="Veitia R."/>
            <person name="Kirchner J."/>
            <person name="Bevan M.J."/>
            <person name="Kanellopoulos J."/>
        </authorList>
    </citation>
    <scope>NUCLEOTIDE SEQUENCE [MRNA] (ISOFORM 1)</scope>
    <source>
        <strain>C57BL/6J</strain>
    </source>
</reference>
<reference key="3">
    <citation type="journal article" date="2005" name="Science">
        <title>The transcriptional landscape of the mammalian genome.</title>
        <authorList>
            <person name="Carninci P."/>
            <person name="Kasukawa T."/>
            <person name="Katayama S."/>
            <person name="Gough J."/>
            <person name="Frith M.C."/>
            <person name="Maeda N."/>
            <person name="Oyama R."/>
            <person name="Ravasi T."/>
            <person name="Lenhard B."/>
            <person name="Wells C."/>
            <person name="Kodzius R."/>
            <person name="Shimokawa K."/>
            <person name="Bajic V.B."/>
            <person name="Brenner S.E."/>
            <person name="Batalov S."/>
            <person name="Forrest A.R."/>
            <person name="Zavolan M."/>
            <person name="Davis M.J."/>
            <person name="Wilming L.G."/>
            <person name="Aidinis V."/>
            <person name="Allen J.E."/>
            <person name="Ambesi-Impiombato A."/>
            <person name="Apweiler R."/>
            <person name="Aturaliya R.N."/>
            <person name="Bailey T.L."/>
            <person name="Bansal M."/>
            <person name="Baxter L."/>
            <person name="Beisel K.W."/>
            <person name="Bersano T."/>
            <person name="Bono H."/>
            <person name="Chalk A.M."/>
            <person name="Chiu K.P."/>
            <person name="Choudhary V."/>
            <person name="Christoffels A."/>
            <person name="Clutterbuck D.R."/>
            <person name="Crowe M.L."/>
            <person name="Dalla E."/>
            <person name="Dalrymple B.P."/>
            <person name="de Bono B."/>
            <person name="Della Gatta G."/>
            <person name="di Bernardo D."/>
            <person name="Down T."/>
            <person name="Engstrom P."/>
            <person name="Fagiolini M."/>
            <person name="Faulkner G."/>
            <person name="Fletcher C.F."/>
            <person name="Fukushima T."/>
            <person name="Furuno M."/>
            <person name="Futaki S."/>
            <person name="Gariboldi M."/>
            <person name="Georgii-Hemming P."/>
            <person name="Gingeras T.R."/>
            <person name="Gojobori T."/>
            <person name="Green R.E."/>
            <person name="Gustincich S."/>
            <person name="Harbers M."/>
            <person name="Hayashi Y."/>
            <person name="Hensch T.K."/>
            <person name="Hirokawa N."/>
            <person name="Hill D."/>
            <person name="Huminiecki L."/>
            <person name="Iacono M."/>
            <person name="Ikeo K."/>
            <person name="Iwama A."/>
            <person name="Ishikawa T."/>
            <person name="Jakt M."/>
            <person name="Kanapin A."/>
            <person name="Katoh M."/>
            <person name="Kawasawa Y."/>
            <person name="Kelso J."/>
            <person name="Kitamura H."/>
            <person name="Kitano H."/>
            <person name="Kollias G."/>
            <person name="Krishnan S.P."/>
            <person name="Kruger A."/>
            <person name="Kummerfeld S.K."/>
            <person name="Kurochkin I.V."/>
            <person name="Lareau L.F."/>
            <person name="Lazarevic D."/>
            <person name="Lipovich L."/>
            <person name="Liu J."/>
            <person name="Liuni S."/>
            <person name="McWilliam S."/>
            <person name="Madan Babu M."/>
            <person name="Madera M."/>
            <person name="Marchionni L."/>
            <person name="Matsuda H."/>
            <person name="Matsuzawa S."/>
            <person name="Miki H."/>
            <person name="Mignone F."/>
            <person name="Miyake S."/>
            <person name="Morris K."/>
            <person name="Mottagui-Tabar S."/>
            <person name="Mulder N."/>
            <person name="Nakano N."/>
            <person name="Nakauchi H."/>
            <person name="Ng P."/>
            <person name="Nilsson R."/>
            <person name="Nishiguchi S."/>
            <person name="Nishikawa S."/>
            <person name="Nori F."/>
            <person name="Ohara O."/>
            <person name="Okazaki Y."/>
            <person name="Orlando V."/>
            <person name="Pang K.C."/>
            <person name="Pavan W.J."/>
            <person name="Pavesi G."/>
            <person name="Pesole G."/>
            <person name="Petrovsky N."/>
            <person name="Piazza S."/>
            <person name="Reed J."/>
            <person name="Reid J.F."/>
            <person name="Ring B.Z."/>
            <person name="Ringwald M."/>
            <person name="Rost B."/>
            <person name="Ruan Y."/>
            <person name="Salzberg S.L."/>
            <person name="Sandelin A."/>
            <person name="Schneider C."/>
            <person name="Schoenbach C."/>
            <person name="Sekiguchi K."/>
            <person name="Semple C.A."/>
            <person name="Seno S."/>
            <person name="Sessa L."/>
            <person name="Sheng Y."/>
            <person name="Shibata Y."/>
            <person name="Shimada H."/>
            <person name="Shimada K."/>
            <person name="Silva D."/>
            <person name="Sinclair B."/>
            <person name="Sperling S."/>
            <person name="Stupka E."/>
            <person name="Sugiura K."/>
            <person name="Sultana R."/>
            <person name="Takenaka Y."/>
            <person name="Taki K."/>
            <person name="Tammoja K."/>
            <person name="Tan S.L."/>
            <person name="Tang S."/>
            <person name="Taylor M.S."/>
            <person name="Tegner J."/>
            <person name="Teichmann S.A."/>
            <person name="Ueda H.R."/>
            <person name="van Nimwegen E."/>
            <person name="Verardo R."/>
            <person name="Wei C.L."/>
            <person name="Yagi K."/>
            <person name="Yamanishi H."/>
            <person name="Zabarovsky E."/>
            <person name="Zhu S."/>
            <person name="Zimmer A."/>
            <person name="Hide W."/>
            <person name="Bult C."/>
            <person name="Grimmond S.M."/>
            <person name="Teasdale R.D."/>
            <person name="Liu E.T."/>
            <person name="Brusic V."/>
            <person name="Quackenbush J."/>
            <person name="Wahlestedt C."/>
            <person name="Mattick J.S."/>
            <person name="Hume D.A."/>
            <person name="Kai C."/>
            <person name="Sasaki D."/>
            <person name="Tomaru Y."/>
            <person name="Fukuda S."/>
            <person name="Kanamori-Katayama M."/>
            <person name="Suzuki M."/>
            <person name="Aoki J."/>
            <person name="Arakawa T."/>
            <person name="Iida J."/>
            <person name="Imamura K."/>
            <person name="Itoh M."/>
            <person name="Kato T."/>
            <person name="Kawaji H."/>
            <person name="Kawagashira N."/>
            <person name="Kawashima T."/>
            <person name="Kojima M."/>
            <person name="Kondo S."/>
            <person name="Konno H."/>
            <person name="Nakano K."/>
            <person name="Ninomiya N."/>
            <person name="Nishio T."/>
            <person name="Okada M."/>
            <person name="Plessy C."/>
            <person name="Shibata K."/>
            <person name="Shiraki T."/>
            <person name="Suzuki S."/>
            <person name="Tagami M."/>
            <person name="Waki K."/>
            <person name="Watahiki A."/>
            <person name="Okamura-Oho Y."/>
            <person name="Suzuki H."/>
            <person name="Kawai J."/>
            <person name="Hayashizaki Y."/>
        </authorList>
    </citation>
    <scope>NUCLEOTIDE SEQUENCE [LARGE SCALE MRNA] (ISOFORM 2)</scope>
    <source>
        <strain>C57BL/6J</strain>
        <tissue>Thymus</tissue>
    </source>
</reference>
<reference key="4">
    <citation type="journal article" date="2009" name="PLoS Biol.">
        <title>Lineage-specific biology revealed by a finished genome assembly of the mouse.</title>
        <authorList>
            <person name="Church D.M."/>
            <person name="Goodstadt L."/>
            <person name="Hillier L.W."/>
            <person name="Zody M.C."/>
            <person name="Goldstein S."/>
            <person name="She X."/>
            <person name="Bult C.J."/>
            <person name="Agarwala R."/>
            <person name="Cherry J.L."/>
            <person name="DiCuccio M."/>
            <person name="Hlavina W."/>
            <person name="Kapustin Y."/>
            <person name="Meric P."/>
            <person name="Maglott D."/>
            <person name="Birtle Z."/>
            <person name="Marques A.C."/>
            <person name="Graves T."/>
            <person name="Zhou S."/>
            <person name="Teague B."/>
            <person name="Potamousis K."/>
            <person name="Churas C."/>
            <person name="Place M."/>
            <person name="Herschleb J."/>
            <person name="Runnheim R."/>
            <person name="Forrest D."/>
            <person name="Amos-Landgraf J."/>
            <person name="Schwartz D.C."/>
            <person name="Cheng Z."/>
            <person name="Lindblad-Toh K."/>
            <person name="Eichler E.E."/>
            <person name="Ponting C.P."/>
        </authorList>
    </citation>
    <scope>NUCLEOTIDE SEQUENCE [LARGE SCALE GENOMIC DNA]</scope>
    <source>
        <strain>C57BL/6J</strain>
    </source>
</reference>
<reference key="5">
    <citation type="journal article" date="2004" name="Genome Res.">
        <title>The status, quality, and expansion of the NIH full-length cDNA project: the Mammalian Gene Collection (MGC).</title>
        <authorList>
            <consortium name="The MGC Project Team"/>
        </authorList>
    </citation>
    <scope>NUCLEOTIDE SEQUENCE [LARGE SCALE MRNA] (ISOFORM 3)</scope>
</reference>
<dbReference type="EMBL" id="AF367970">
    <property type="protein sequence ID" value="AAK60524.1"/>
    <property type="molecule type" value="mRNA"/>
</dbReference>
<dbReference type="EMBL" id="AF367971">
    <property type="protein sequence ID" value="AAK60525.1"/>
    <property type="molecule type" value="mRNA"/>
</dbReference>
<dbReference type="EMBL" id="AF367972">
    <property type="protein sequence ID" value="AAK60926.1"/>
    <property type="molecule type" value="Genomic_DNA"/>
</dbReference>
<dbReference type="EMBL" id="AF367972">
    <property type="protein sequence ID" value="AAK60925.1"/>
    <property type="molecule type" value="Genomic_DNA"/>
</dbReference>
<dbReference type="EMBL" id="AY555745">
    <property type="protein sequence ID" value="AAS66891.1"/>
    <property type="status" value="ALT_FRAME"/>
    <property type="molecule type" value="mRNA"/>
</dbReference>
<dbReference type="EMBL" id="AK080272">
    <property type="protein sequence ID" value="BAC37863.1"/>
    <property type="molecule type" value="mRNA"/>
</dbReference>
<dbReference type="EMBL" id="GL456179">
    <property type="status" value="NOT_ANNOTATED_CDS"/>
    <property type="molecule type" value="Genomic_DNA"/>
</dbReference>
<dbReference type="EMBL" id="BC116360">
    <property type="protein sequence ID" value="AAI16361.1"/>
    <property type="molecule type" value="mRNA"/>
</dbReference>
<dbReference type="CCDS" id="CCDS28828.1">
    <molecule id="Q6Q6R3-3"/>
</dbReference>
<dbReference type="CCDS" id="CCDS37635.1">
    <molecule id="Q6Q6R3-2"/>
</dbReference>
<dbReference type="RefSeq" id="NP_444480.1">
    <property type="nucleotide sequence ID" value="NM_053250.2"/>
</dbReference>
<dbReference type="RefSeq" id="NP_858050.1">
    <property type="nucleotide sequence ID" value="NM_181664.2"/>
</dbReference>
<dbReference type="FunCoup" id="Q6Q6R3">
    <property type="interactions" value="53"/>
</dbReference>
<dbReference type="PhosphoSitePlus" id="Q6Q6R3"/>
<dbReference type="PaxDb" id="10090-ENSMUSP00000109092"/>
<dbReference type="ProteomicsDB" id="284015">
    <molecule id="Q6Q6R3-1"/>
</dbReference>
<dbReference type="ProteomicsDB" id="284016">
    <molecule id="Q6Q6R3-2"/>
</dbReference>
<dbReference type="ProteomicsDB" id="284017">
    <molecule id="Q6Q6R3-3"/>
</dbReference>
<dbReference type="ProteomicsDB" id="367252"/>
<dbReference type="Antibodypedia" id="50337">
    <property type="antibodies" value="8 antibodies from 7 providers"/>
</dbReference>
<dbReference type="DNASU" id="114570"/>
<dbReference type="GeneID" id="114570"/>
<dbReference type="KEGG" id="mmu:114570"/>
<dbReference type="UCSC" id="uc008cst.1">
    <property type="organism name" value="mouse"/>
</dbReference>
<dbReference type="UCSC" id="uc008csu.1">
    <molecule id="Q6Q6R3-2"/>
    <property type="organism name" value="mouse"/>
</dbReference>
<dbReference type="AGR" id="MGI:2152434"/>
<dbReference type="CTD" id="401262"/>
<dbReference type="MGI" id="MGI:2152434">
    <property type="gene designation" value="Crip3"/>
</dbReference>
<dbReference type="VEuPathDB" id="HostDB:ENSMUSG00000023968"/>
<dbReference type="eggNOG" id="KOG1700">
    <property type="taxonomic scope" value="Eukaryota"/>
</dbReference>
<dbReference type="HOGENOM" id="CLU_054591_2_0_1"/>
<dbReference type="InParanoid" id="Q6Q6R3"/>
<dbReference type="PhylomeDB" id="Q6Q6R3"/>
<dbReference type="TreeFam" id="TF313758"/>
<dbReference type="BioGRID-ORCS" id="114570">
    <property type="hits" value="2 hits in 77 CRISPR screens"/>
</dbReference>
<dbReference type="ChiTaRS" id="Tbpl1">
    <property type="organism name" value="mouse"/>
</dbReference>
<dbReference type="PRO" id="PR:Q6Q6R3"/>
<dbReference type="Proteomes" id="UP000000589">
    <property type="component" value="Chromosome 17"/>
</dbReference>
<dbReference type="RNAct" id="Q6Q6R3">
    <property type="molecule type" value="protein"/>
</dbReference>
<dbReference type="Bgee" id="ENSMUSG00000023968">
    <property type="expression patterns" value="Expressed in thymus and 147 other cell types or tissues"/>
</dbReference>
<dbReference type="ExpressionAtlas" id="Q6Q6R3">
    <property type="expression patterns" value="baseline and differential"/>
</dbReference>
<dbReference type="GO" id="GO:0005737">
    <property type="term" value="C:cytoplasm"/>
    <property type="evidence" value="ECO:0000314"/>
    <property type="project" value="MGI"/>
</dbReference>
<dbReference type="GO" id="GO:0046872">
    <property type="term" value="F:metal ion binding"/>
    <property type="evidence" value="ECO:0007669"/>
    <property type="project" value="UniProtKB-KW"/>
</dbReference>
<dbReference type="GO" id="GO:0042098">
    <property type="term" value="P:T cell proliferation"/>
    <property type="evidence" value="ECO:0000315"/>
    <property type="project" value="MGI"/>
</dbReference>
<dbReference type="CDD" id="cd09476">
    <property type="entry name" value="LIM1_TLP"/>
    <property type="match status" value="1"/>
</dbReference>
<dbReference type="CDD" id="cd09477">
    <property type="entry name" value="LIM2_TLP"/>
    <property type="match status" value="1"/>
</dbReference>
<dbReference type="FunFam" id="2.10.110.10:FF:000025">
    <property type="entry name" value="Cysteine-rich protein 2"/>
    <property type="match status" value="2"/>
</dbReference>
<dbReference type="Gene3D" id="2.10.110.10">
    <property type="entry name" value="Cysteine Rich Protein"/>
    <property type="match status" value="2"/>
</dbReference>
<dbReference type="InterPro" id="IPR001781">
    <property type="entry name" value="Znf_LIM"/>
</dbReference>
<dbReference type="PANTHER" id="PTHR46074:SF4">
    <property type="entry name" value="CYSTEINE-RICH PROTEIN 3"/>
    <property type="match status" value="1"/>
</dbReference>
<dbReference type="PANTHER" id="PTHR46074">
    <property type="entry name" value="CYSTEINE-RICH PROTEIN CRIP FAMILY MEMBER"/>
    <property type="match status" value="1"/>
</dbReference>
<dbReference type="Pfam" id="PF00412">
    <property type="entry name" value="LIM"/>
    <property type="match status" value="2"/>
</dbReference>
<dbReference type="SMART" id="SM00132">
    <property type="entry name" value="LIM"/>
    <property type="match status" value="2"/>
</dbReference>
<dbReference type="SUPFAM" id="SSF57716">
    <property type="entry name" value="Glucocorticoid receptor-like (DNA-binding domain)"/>
    <property type="match status" value="4"/>
</dbReference>
<dbReference type="PROSITE" id="PS00478">
    <property type="entry name" value="LIM_DOMAIN_1"/>
    <property type="match status" value="2"/>
</dbReference>
<dbReference type="PROSITE" id="PS50023">
    <property type="entry name" value="LIM_DOMAIN_2"/>
    <property type="match status" value="2"/>
</dbReference>
<name>CRIP3_MOUSE</name>
<comment type="subcellular location">
    <subcellularLocation>
        <location evidence="3">Cytoplasm</location>
    </subcellularLocation>
</comment>
<comment type="alternative products">
    <event type="alternative splicing"/>
    <isoform>
        <id>Q6Q6R3-3</id>
        <name>3</name>
        <name>TLP-A</name>
        <sequence type="displayed"/>
    </isoform>
    <isoform>
        <id>Q6Q6R3-1</id>
        <name>1</name>
        <name>TLP-C</name>
        <sequence type="described" ref="VSP_061232"/>
    </isoform>
    <isoform>
        <id>Q6Q6R3-2</id>
        <name>2</name>
        <name>TLP-B</name>
        <sequence type="described" ref="VSP_061233"/>
    </isoform>
</comment>
<comment type="tissue specificity">
    <text evidence="3">Expressed specifically by the thymus.</text>
</comment>
<comment type="sequence caution" evidence="7">
    <conflict type="frameshift">
        <sequence resource="EMBL-CDS" id="AAS66891"/>
    </conflict>
</comment>
<accession>Q6Q6R3</accession>
<accession>E9Q860</accession>
<accession>Q14B40</accession>
<accession>Q91V23</accession>
<accession>Q91V60</accession>
<organism>
    <name type="scientific">Mus musculus</name>
    <name type="common">Mouse</name>
    <dbReference type="NCBI Taxonomy" id="10090"/>
    <lineage>
        <taxon>Eukaryota</taxon>
        <taxon>Metazoa</taxon>
        <taxon>Chordata</taxon>
        <taxon>Craniata</taxon>
        <taxon>Vertebrata</taxon>
        <taxon>Euteleostomi</taxon>
        <taxon>Mammalia</taxon>
        <taxon>Eutheria</taxon>
        <taxon>Euarchontoglires</taxon>
        <taxon>Glires</taxon>
        <taxon>Rodentia</taxon>
        <taxon>Myomorpha</taxon>
        <taxon>Muroidea</taxon>
        <taxon>Muridae</taxon>
        <taxon>Murinae</taxon>
        <taxon>Mus</taxon>
        <taxon>Mus</taxon>
    </lineage>
</organism>
<feature type="chain" id="PRO_0000225639" description="Cysteine-rich protein 3">
    <location>
        <begin position="1"/>
        <end position="204"/>
    </location>
</feature>
<feature type="domain" description="LIM zinc-binding 1" evidence="1">
    <location>
        <begin position="3"/>
        <end position="64"/>
    </location>
</feature>
<feature type="domain" description="LIM zinc-binding 2" evidence="1">
    <location>
        <begin position="122"/>
        <end position="183"/>
    </location>
</feature>
<feature type="region of interest" description="Disordered" evidence="2">
    <location>
        <begin position="88"/>
        <end position="107"/>
    </location>
</feature>
<feature type="splice variant" id="VSP_061232" description="In isoform 1." evidence="5">
    <original>VNIGDVGCYIYDPVDIRSK</original>
    <variation>GQSDPRHWTYENVWTTSLVVRHLDPSPIPSDLHPLANKALGDRALSFRCEHWRCGLLHL</variation>
    <location>
        <begin position="186"/>
        <end position="204"/>
    </location>
</feature>
<feature type="splice variant" id="VSP_061233" description="In isoform 2." evidence="4 6">
    <original>VNIGDVGCYIYDPVDIRSK</original>
    <variation>GQSDPRHWTYENVWTTSLVV</variation>
    <location>
        <begin position="186"/>
        <end position="204"/>
    </location>
</feature>
<feature type="sequence conflict" description="In Ref. 1; AAK60925/AAK60926/AAK60525/AAK60524, 2; AAS66891, 3; BAC37863 and 5; AAI16361." evidence="7" ref="1 2 3 5">
    <original>G</original>
    <variation>R</variation>
    <location>
        <position position="110"/>
    </location>
</feature>